<gene>
    <name evidence="1" type="primary">rpsB</name>
    <name type="ordered locus">EcSMS35_0180</name>
</gene>
<proteinExistence type="inferred from homology"/>
<organism>
    <name type="scientific">Escherichia coli (strain SMS-3-5 / SECEC)</name>
    <dbReference type="NCBI Taxonomy" id="439855"/>
    <lineage>
        <taxon>Bacteria</taxon>
        <taxon>Pseudomonadati</taxon>
        <taxon>Pseudomonadota</taxon>
        <taxon>Gammaproteobacteria</taxon>
        <taxon>Enterobacterales</taxon>
        <taxon>Enterobacteriaceae</taxon>
        <taxon>Escherichia</taxon>
    </lineage>
</organism>
<sequence>MATVSMRDMLKAGVHFGHQTRYWNPKMKPFIFGARNKVHIINLEKTVPMFNEALAELNKIASRKGKILFVGTKRAASEAVKDAALSCDQFFVNHRWLGGMLTNWKTVRQSIKRLKDLETQSQDGTFDKLTKKEALMRTRELEKLENSLGGIKDMGGLPDALFVIDADHEHIAIKEANNLGIPVFAIVDTNSDPDGVDFVIPGNDDAIRAVTLYLGAVAATVREGRSQDLASQAEESFVEAE</sequence>
<accession>B1LGX0</accession>
<keyword id="KW-0687">Ribonucleoprotein</keyword>
<keyword id="KW-0689">Ribosomal protein</keyword>
<protein>
    <recommendedName>
        <fullName evidence="1">Small ribosomal subunit protein uS2</fullName>
    </recommendedName>
    <alternativeName>
        <fullName evidence="2">30S ribosomal protein S2</fullName>
    </alternativeName>
</protein>
<name>RS2_ECOSM</name>
<comment type="similarity">
    <text evidence="1">Belongs to the universal ribosomal protein uS2 family.</text>
</comment>
<reference key="1">
    <citation type="journal article" date="2008" name="J. Bacteriol.">
        <title>Insights into the environmental resistance gene pool from the genome sequence of the multidrug-resistant environmental isolate Escherichia coli SMS-3-5.</title>
        <authorList>
            <person name="Fricke W.F."/>
            <person name="Wright M.S."/>
            <person name="Lindell A.H."/>
            <person name="Harkins D.M."/>
            <person name="Baker-Austin C."/>
            <person name="Ravel J."/>
            <person name="Stepanauskas R."/>
        </authorList>
    </citation>
    <scope>NUCLEOTIDE SEQUENCE [LARGE SCALE GENOMIC DNA]</scope>
    <source>
        <strain>SMS-3-5 / SECEC</strain>
    </source>
</reference>
<feature type="chain" id="PRO_1000119428" description="Small ribosomal subunit protein uS2">
    <location>
        <begin position="1"/>
        <end position="241"/>
    </location>
</feature>
<evidence type="ECO:0000255" key="1">
    <source>
        <dbReference type="HAMAP-Rule" id="MF_00291"/>
    </source>
</evidence>
<evidence type="ECO:0000305" key="2"/>
<dbReference type="EMBL" id="CP000970">
    <property type="protein sequence ID" value="ACB15548.1"/>
    <property type="molecule type" value="Genomic_DNA"/>
</dbReference>
<dbReference type="RefSeq" id="WP_000246882.1">
    <property type="nucleotide sequence ID" value="NC_010498.1"/>
</dbReference>
<dbReference type="SMR" id="B1LGX0"/>
<dbReference type="GeneID" id="89519558"/>
<dbReference type="KEGG" id="ecm:EcSMS35_0180"/>
<dbReference type="HOGENOM" id="CLU_040318_1_2_6"/>
<dbReference type="Proteomes" id="UP000007011">
    <property type="component" value="Chromosome"/>
</dbReference>
<dbReference type="GO" id="GO:0022627">
    <property type="term" value="C:cytosolic small ribosomal subunit"/>
    <property type="evidence" value="ECO:0007669"/>
    <property type="project" value="TreeGrafter"/>
</dbReference>
<dbReference type="GO" id="GO:0003735">
    <property type="term" value="F:structural constituent of ribosome"/>
    <property type="evidence" value="ECO:0007669"/>
    <property type="project" value="InterPro"/>
</dbReference>
<dbReference type="GO" id="GO:0006412">
    <property type="term" value="P:translation"/>
    <property type="evidence" value="ECO:0007669"/>
    <property type="project" value="UniProtKB-UniRule"/>
</dbReference>
<dbReference type="CDD" id="cd01425">
    <property type="entry name" value="RPS2"/>
    <property type="match status" value="1"/>
</dbReference>
<dbReference type="FunFam" id="1.10.287.610:FF:000001">
    <property type="entry name" value="30S ribosomal protein S2"/>
    <property type="match status" value="1"/>
</dbReference>
<dbReference type="Gene3D" id="3.40.50.10490">
    <property type="entry name" value="Glucose-6-phosphate isomerase like protein, domain 1"/>
    <property type="match status" value="1"/>
</dbReference>
<dbReference type="Gene3D" id="1.10.287.610">
    <property type="entry name" value="Helix hairpin bin"/>
    <property type="match status" value="1"/>
</dbReference>
<dbReference type="HAMAP" id="MF_00291_B">
    <property type="entry name" value="Ribosomal_uS2_B"/>
    <property type="match status" value="1"/>
</dbReference>
<dbReference type="InterPro" id="IPR001865">
    <property type="entry name" value="Ribosomal_uS2"/>
</dbReference>
<dbReference type="InterPro" id="IPR005706">
    <property type="entry name" value="Ribosomal_uS2_bac/mit/plastid"/>
</dbReference>
<dbReference type="InterPro" id="IPR018130">
    <property type="entry name" value="Ribosomal_uS2_CS"/>
</dbReference>
<dbReference type="InterPro" id="IPR023591">
    <property type="entry name" value="Ribosomal_uS2_flav_dom_sf"/>
</dbReference>
<dbReference type="NCBIfam" id="TIGR01011">
    <property type="entry name" value="rpsB_bact"/>
    <property type="match status" value="1"/>
</dbReference>
<dbReference type="PANTHER" id="PTHR12534">
    <property type="entry name" value="30S RIBOSOMAL PROTEIN S2 PROKARYOTIC AND ORGANELLAR"/>
    <property type="match status" value="1"/>
</dbReference>
<dbReference type="PANTHER" id="PTHR12534:SF0">
    <property type="entry name" value="SMALL RIBOSOMAL SUBUNIT PROTEIN US2M"/>
    <property type="match status" value="1"/>
</dbReference>
<dbReference type="Pfam" id="PF00318">
    <property type="entry name" value="Ribosomal_S2"/>
    <property type="match status" value="1"/>
</dbReference>
<dbReference type="PRINTS" id="PR00395">
    <property type="entry name" value="RIBOSOMALS2"/>
</dbReference>
<dbReference type="SUPFAM" id="SSF52313">
    <property type="entry name" value="Ribosomal protein S2"/>
    <property type="match status" value="1"/>
</dbReference>
<dbReference type="PROSITE" id="PS00962">
    <property type="entry name" value="RIBOSOMAL_S2_1"/>
    <property type="match status" value="1"/>
</dbReference>
<dbReference type="PROSITE" id="PS00963">
    <property type="entry name" value="RIBOSOMAL_S2_2"/>
    <property type="match status" value="1"/>
</dbReference>